<feature type="chain" id="PRO_0000171943" description="UPF0316 protein lp_1140">
    <location>
        <begin position="1"/>
        <end position="182"/>
    </location>
</feature>
<feature type="transmembrane region" description="Helical" evidence="1">
    <location>
        <begin position="1"/>
        <end position="21"/>
    </location>
</feature>
<feature type="transmembrane region" description="Helical" evidence="1">
    <location>
        <begin position="36"/>
        <end position="56"/>
    </location>
</feature>
<feature type="transmembrane region" description="Helical" evidence="1">
    <location>
        <begin position="62"/>
        <end position="82"/>
    </location>
</feature>
<evidence type="ECO:0000255" key="1">
    <source>
        <dbReference type="HAMAP-Rule" id="MF_01515"/>
    </source>
</evidence>
<proteinExistence type="inferred from homology"/>
<protein>
    <recommendedName>
        <fullName evidence="1">UPF0316 protein lp_1140</fullName>
    </recommendedName>
</protein>
<gene>
    <name type="ordered locus">lp_1140</name>
</gene>
<name>Y1140_LACPL</name>
<sequence>MHIDMGMLVLIFIINFAYITLNTVRFLLVMRGYRYFAAFASVIEITIYVLGLSLVLNRLNNPINLVVYALGYGVGVYVGMVIEDRLALGYTMISVILPDPKSSLPGVLRENGFGVTQHAAYGLEGERLELEILAPRKNERRLYGLIKDAAPNAFVIAYEPRYISGGFWLKRVKRRNARRKKQ</sequence>
<comment type="subcellular location">
    <subcellularLocation>
        <location evidence="1">Cell membrane</location>
        <topology evidence="1">Multi-pass membrane protein</topology>
    </subcellularLocation>
</comment>
<comment type="similarity">
    <text evidence="1">Belongs to the UPF0316 family.</text>
</comment>
<dbReference type="EMBL" id="AL935263">
    <property type="protein sequence ID" value="CCC78532.1"/>
    <property type="molecule type" value="Genomic_DNA"/>
</dbReference>
<dbReference type="RefSeq" id="WP_003644127.1">
    <property type="nucleotide sequence ID" value="NC_004567.2"/>
</dbReference>
<dbReference type="RefSeq" id="YP_004889046.1">
    <property type="nucleotide sequence ID" value="NC_004567.2"/>
</dbReference>
<dbReference type="SMR" id="Q88XQ3"/>
<dbReference type="STRING" id="220668.lp_1140"/>
<dbReference type="EnsemblBacteria" id="CCC78532">
    <property type="protein sequence ID" value="CCC78532"/>
    <property type="gene ID" value="lp_1140"/>
</dbReference>
<dbReference type="KEGG" id="lpl:lp_1140"/>
<dbReference type="PATRIC" id="fig|220668.9.peg.963"/>
<dbReference type="eggNOG" id="COG4843">
    <property type="taxonomic scope" value="Bacteria"/>
</dbReference>
<dbReference type="HOGENOM" id="CLU_106166_1_0_9"/>
<dbReference type="OrthoDB" id="48231at2"/>
<dbReference type="PhylomeDB" id="Q88XQ3"/>
<dbReference type="Proteomes" id="UP000000432">
    <property type="component" value="Chromosome"/>
</dbReference>
<dbReference type="GO" id="GO:0005886">
    <property type="term" value="C:plasma membrane"/>
    <property type="evidence" value="ECO:0007669"/>
    <property type="project" value="UniProtKB-SubCell"/>
</dbReference>
<dbReference type="CDD" id="cd16381">
    <property type="entry name" value="YitT_C_like_1"/>
    <property type="match status" value="1"/>
</dbReference>
<dbReference type="HAMAP" id="MF_01515">
    <property type="entry name" value="UPF0316"/>
    <property type="match status" value="1"/>
</dbReference>
<dbReference type="InterPro" id="IPR019264">
    <property type="entry name" value="DUF2179"/>
</dbReference>
<dbReference type="InterPro" id="IPR044035">
    <property type="entry name" value="DUF5698"/>
</dbReference>
<dbReference type="InterPro" id="IPR022930">
    <property type="entry name" value="UPF0316"/>
</dbReference>
<dbReference type="NCBIfam" id="NF003194">
    <property type="entry name" value="PRK04164.1-5"/>
    <property type="match status" value="1"/>
</dbReference>
<dbReference type="PANTHER" id="PTHR40060">
    <property type="entry name" value="UPF0316 PROTEIN YEBE"/>
    <property type="match status" value="1"/>
</dbReference>
<dbReference type="PANTHER" id="PTHR40060:SF1">
    <property type="entry name" value="UPF0316 PROTEIN YEBE"/>
    <property type="match status" value="1"/>
</dbReference>
<dbReference type="Pfam" id="PF10035">
    <property type="entry name" value="DUF2179"/>
    <property type="match status" value="1"/>
</dbReference>
<dbReference type="Pfam" id="PF18955">
    <property type="entry name" value="DUF5698"/>
    <property type="match status" value="1"/>
</dbReference>
<organism>
    <name type="scientific">Lactiplantibacillus plantarum (strain ATCC BAA-793 / NCIMB 8826 / WCFS1)</name>
    <name type="common">Lactobacillus plantarum</name>
    <dbReference type="NCBI Taxonomy" id="220668"/>
    <lineage>
        <taxon>Bacteria</taxon>
        <taxon>Bacillati</taxon>
        <taxon>Bacillota</taxon>
        <taxon>Bacilli</taxon>
        <taxon>Lactobacillales</taxon>
        <taxon>Lactobacillaceae</taxon>
        <taxon>Lactiplantibacillus</taxon>
    </lineage>
</organism>
<reference key="1">
    <citation type="journal article" date="2003" name="Proc. Natl. Acad. Sci. U.S.A.">
        <title>Complete genome sequence of Lactobacillus plantarum WCFS1.</title>
        <authorList>
            <person name="Kleerebezem M."/>
            <person name="Boekhorst J."/>
            <person name="van Kranenburg R."/>
            <person name="Molenaar D."/>
            <person name="Kuipers O.P."/>
            <person name="Leer R."/>
            <person name="Tarchini R."/>
            <person name="Peters S.A."/>
            <person name="Sandbrink H.M."/>
            <person name="Fiers M.W.E.J."/>
            <person name="Stiekema W."/>
            <person name="Klein Lankhorst R.M."/>
            <person name="Bron P.A."/>
            <person name="Hoffer S.M."/>
            <person name="Nierop Groot M.N."/>
            <person name="Kerkhoven R."/>
            <person name="De Vries M."/>
            <person name="Ursing B."/>
            <person name="De Vos W.M."/>
            <person name="Siezen R.J."/>
        </authorList>
    </citation>
    <scope>NUCLEOTIDE SEQUENCE [LARGE SCALE GENOMIC DNA]</scope>
    <source>
        <strain>ATCC BAA-793 / NCIMB 8826 / WCFS1</strain>
    </source>
</reference>
<reference key="2">
    <citation type="journal article" date="2012" name="J. Bacteriol.">
        <title>Complete resequencing and reannotation of the Lactobacillus plantarum WCFS1 genome.</title>
        <authorList>
            <person name="Siezen R.J."/>
            <person name="Francke C."/>
            <person name="Renckens B."/>
            <person name="Boekhorst J."/>
            <person name="Wels M."/>
            <person name="Kleerebezem M."/>
            <person name="van Hijum S.A."/>
        </authorList>
    </citation>
    <scope>NUCLEOTIDE SEQUENCE [LARGE SCALE GENOMIC DNA]</scope>
    <scope>GENOME REANNOTATION</scope>
    <source>
        <strain>ATCC BAA-793 / NCIMB 8826 / WCFS1</strain>
    </source>
</reference>
<keyword id="KW-1003">Cell membrane</keyword>
<keyword id="KW-0472">Membrane</keyword>
<keyword id="KW-1185">Reference proteome</keyword>
<keyword id="KW-0812">Transmembrane</keyword>
<keyword id="KW-1133">Transmembrane helix</keyword>
<accession>Q88XQ3</accession>
<accession>F9UMU3</accession>